<keyword id="KW-0021">Allosteric enzyme</keyword>
<keyword id="KW-0067">ATP-binding</keyword>
<keyword id="KW-0963">Cytoplasm</keyword>
<keyword id="KW-0324">Glycolysis</keyword>
<keyword id="KW-0418">Kinase</keyword>
<keyword id="KW-0460">Magnesium</keyword>
<keyword id="KW-0479">Metal-binding</keyword>
<keyword id="KW-0547">Nucleotide-binding</keyword>
<keyword id="KW-1185">Reference proteome</keyword>
<keyword id="KW-0808">Transferase</keyword>
<proteinExistence type="evidence at protein level"/>
<sequence>MTQSLPLLNGTEAYKLVTTQGLYDKTVKFYEKYLQLVHDKRVGTLTNSLITLKLVVDNSFKPLDVVNDKDWRAIVSSALVFSCTNIQHFRDLAAGETIQAYPNETNPIEIYLKDPNGYIIGITETKNAISIKPTLPKQSVEASLISSRSSRIDIASSGVSTDSSYPAIPKTAKAQKSIAVMTSGGDAPGMNANVRAIVRTAIFKGCNAFVVMEGYEGLVKGGPNYIKQVYWETVRNWSCEGGTNIGTARCKEFREREGRLLGALHLIEAGVDALIVCGGDGSLTGADLFRSEWPSLIRELLDQGRINKVQFDRYQHLNICGTVGSIDNDMSTTDATIGAYSALDRICQAIDYIEATANSHSRAFVVEVMGRNCGWLALLAGISTSADYILIPEKPASSREWQDQMCDIISKHRSRGKRTTIVIVAEGAISADLTPISSKDVHKVLVDRLGLDCRITTLGHVQRGGTAVAYDRILATLQGVEAVNAVLESTPDTPSPLIAINENKITRKPLVESVQLTKSVAEAIHSKDFKKAMQLRDSEFVEHLDNFMAINSADHIEPKLPEHTHMKIAIVNVGAPAGGMNSAVYSMATYCMSQGHKPYAIYNGWTGLTRHESVRSLNWKDLLGWQSRGGSEIGTNRHTPEEADIGLIAYYFQKYGFDGIIIVGGFEAFVSLHQLERARENYTAFRIPMVLIPATLSNNVPGTEYSLGSDTALNSLMQYCDIIKQSAASTRGRVFVVDVQGGNSGYLATHAAVAVGAQVSYVPEEGISLEQLTQDIENLTESFSEAEGRGKFGQLILKSTNASKVLTPEVLAEVITQEAEGHFDAKCAIPGHVQQGGLPSPIDRTRGTRFAIRAVGFIESQHKVLAAEANLDDDDFDFDTPKIIATASVLGVKGSDIVFSSIRQLYDFETELNKRTPKTIHWQSTRTIADHLVGRKKL</sequence>
<dbReference type="EC" id="2.7.1.11" evidence="1"/>
<dbReference type="EMBL" id="Z17316">
    <property type="protein sequence ID" value="CAA78964.1"/>
    <property type="molecule type" value="Genomic_DNA"/>
</dbReference>
<dbReference type="EMBL" id="CR382126">
    <property type="protein sequence ID" value="CAG98071.1"/>
    <property type="molecule type" value="Genomic_DNA"/>
</dbReference>
<dbReference type="PIR" id="S32903">
    <property type="entry name" value="S32903"/>
</dbReference>
<dbReference type="RefSeq" id="XP_455363.1">
    <property type="nucleotide sequence ID" value="XM_455363.1"/>
</dbReference>
<dbReference type="SMR" id="Q03216"/>
<dbReference type="FunCoup" id="Q03216">
    <property type="interactions" value="1093"/>
</dbReference>
<dbReference type="STRING" id="284590.Q03216"/>
<dbReference type="PaxDb" id="284590-Q03216"/>
<dbReference type="KEGG" id="kla:KLLA0_F06248g"/>
<dbReference type="eggNOG" id="KOG2440">
    <property type="taxonomic scope" value="Eukaryota"/>
</dbReference>
<dbReference type="HOGENOM" id="CLU_011053_0_0_1"/>
<dbReference type="InParanoid" id="Q03216"/>
<dbReference type="OMA" id="EWQDQMC"/>
<dbReference type="SABIO-RK" id="Q03216"/>
<dbReference type="UniPathway" id="UPA00109">
    <property type="reaction ID" value="UER00182"/>
</dbReference>
<dbReference type="Proteomes" id="UP000000598">
    <property type="component" value="Chromosome F"/>
</dbReference>
<dbReference type="GO" id="GO:0005945">
    <property type="term" value="C:6-phosphofructokinase complex"/>
    <property type="evidence" value="ECO:0007669"/>
    <property type="project" value="TreeGrafter"/>
</dbReference>
<dbReference type="GO" id="GO:0005739">
    <property type="term" value="C:mitochondrion"/>
    <property type="evidence" value="ECO:0007669"/>
    <property type="project" value="TreeGrafter"/>
</dbReference>
<dbReference type="GO" id="GO:0003872">
    <property type="term" value="F:6-phosphofructokinase activity"/>
    <property type="evidence" value="ECO:0007669"/>
    <property type="project" value="UniProtKB-UniRule"/>
</dbReference>
<dbReference type="GO" id="GO:0016208">
    <property type="term" value="F:AMP binding"/>
    <property type="evidence" value="ECO:0007669"/>
    <property type="project" value="TreeGrafter"/>
</dbReference>
<dbReference type="GO" id="GO:0005524">
    <property type="term" value="F:ATP binding"/>
    <property type="evidence" value="ECO:0007669"/>
    <property type="project" value="UniProtKB-KW"/>
</dbReference>
<dbReference type="GO" id="GO:0070095">
    <property type="term" value="F:fructose-6-phosphate binding"/>
    <property type="evidence" value="ECO:0007669"/>
    <property type="project" value="TreeGrafter"/>
</dbReference>
<dbReference type="GO" id="GO:0042802">
    <property type="term" value="F:identical protein binding"/>
    <property type="evidence" value="ECO:0007669"/>
    <property type="project" value="TreeGrafter"/>
</dbReference>
<dbReference type="GO" id="GO:0046872">
    <property type="term" value="F:metal ion binding"/>
    <property type="evidence" value="ECO:0007669"/>
    <property type="project" value="UniProtKB-KW"/>
</dbReference>
<dbReference type="GO" id="GO:0048029">
    <property type="term" value="F:monosaccharide binding"/>
    <property type="evidence" value="ECO:0007669"/>
    <property type="project" value="TreeGrafter"/>
</dbReference>
<dbReference type="GO" id="GO:0061621">
    <property type="term" value="P:canonical glycolysis"/>
    <property type="evidence" value="ECO:0007669"/>
    <property type="project" value="TreeGrafter"/>
</dbReference>
<dbReference type="GO" id="GO:0030388">
    <property type="term" value="P:fructose 1,6-bisphosphate metabolic process"/>
    <property type="evidence" value="ECO:0007669"/>
    <property type="project" value="TreeGrafter"/>
</dbReference>
<dbReference type="GO" id="GO:0006002">
    <property type="term" value="P:fructose 6-phosphate metabolic process"/>
    <property type="evidence" value="ECO:0007669"/>
    <property type="project" value="InterPro"/>
</dbReference>
<dbReference type="CDD" id="cd00764">
    <property type="entry name" value="Eukaryotic_PFK"/>
    <property type="match status" value="1"/>
</dbReference>
<dbReference type="FunFam" id="3.40.50.460:FF:000007">
    <property type="entry name" value="ATP-dependent 6-phosphofructokinase"/>
    <property type="match status" value="1"/>
</dbReference>
<dbReference type="FunFam" id="3.40.50.460:FF:000008">
    <property type="entry name" value="ATP-dependent 6-phosphofructokinase"/>
    <property type="match status" value="1"/>
</dbReference>
<dbReference type="Gene3D" id="3.40.50.450">
    <property type="match status" value="2"/>
</dbReference>
<dbReference type="Gene3D" id="3.10.180.10">
    <property type="entry name" value="2,3-Dihydroxybiphenyl 1,2-Dioxygenase, domain 1"/>
    <property type="match status" value="1"/>
</dbReference>
<dbReference type="Gene3D" id="3.40.50.460">
    <property type="entry name" value="Phosphofructokinase domain"/>
    <property type="match status" value="2"/>
</dbReference>
<dbReference type="HAMAP" id="MF_03184">
    <property type="entry name" value="Phosphofructokinase_I_E"/>
    <property type="match status" value="1"/>
</dbReference>
<dbReference type="InterPro" id="IPR009161">
    <property type="entry name" value="6-Pfructokinase_euk"/>
</dbReference>
<dbReference type="InterPro" id="IPR022953">
    <property type="entry name" value="ATP_PFK"/>
</dbReference>
<dbReference type="InterPro" id="IPR029068">
    <property type="entry name" value="Glyas_Bleomycin-R_OHBP_Dase"/>
</dbReference>
<dbReference type="InterPro" id="IPR041914">
    <property type="entry name" value="PFK_vert-type"/>
</dbReference>
<dbReference type="InterPro" id="IPR015912">
    <property type="entry name" value="Phosphofructokinase_CS"/>
</dbReference>
<dbReference type="InterPro" id="IPR000023">
    <property type="entry name" value="Phosphofructokinase_dom"/>
</dbReference>
<dbReference type="InterPro" id="IPR035966">
    <property type="entry name" value="PKF_sf"/>
</dbReference>
<dbReference type="NCBIfam" id="TIGR02478">
    <property type="entry name" value="6PF1K_euk"/>
    <property type="match status" value="1"/>
</dbReference>
<dbReference type="PANTHER" id="PTHR13697:SF4">
    <property type="entry name" value="ATP-DEPENDENT 6-PHOSPHOFRUCTOKINASE"/>
    <property type="match status" value="1"/>
</dbReference>
<dbReference type="PANTHER" id="PTHR13697">
    <property type="entry name" value="PHOSPHOFRUCTOKINASE"/>
    <property type="match status" value="1"/>
</dbReference>
<dbReference type="Pfam" id="PF00365">
    <property type="entry name" value="PFK"/>
    <property type="match status" value="2"/>
</dbReference>
<dbReference type="PIRSF" id="PIRSF000533">
    <property type="entry name" value="ATP_PFK_euk"/>
    <property type="match status" value="1"/>
</dbReference>
<dbReference type="PRINTS" id="PR00476">
    <property type="entry name" value="PHFRCTKINASE"/>
</dbReference>
<dbReference type="SUPFAM" id="SSF53784">
    <property type="entry name" value="Phosphofructokinase"/>
    <property type="match status" value="2"/>
</dbReference>
<dbReference type="PROSITE" id="PS00433">
    <property type="entry name" value="PHOSPHOFRUCTOKINASE"/>
    <property type="match status" value="2"/>
</dbReference>
<reference key="1">
    <citation type="journal article" date="1993" name="Mol. Microbiol.">
        <title>Molecular genetics of phosphofructokinase in the yeast Kluyveromyces lactis.</title>
        <authorList>
            <person name="Heinisch J.J."/>
            <person name="Kirchrath L."/>
            <person name="Liesen T."/>
            <person name="Vogelsang K."/>
            <person name="Hollenberg C.P."/>
        </authorList>
    </citation>
    <scope>NUCLEOTIDE SEQUENCE [GENOMIC DNA]</scope>
    <scope>CHARACTERIZATION</scope>
</reference>
<reference key="2">
    <citation type="journal article" date="2004" name="Nature">
        <title>Genome evolution in yeasts.</title>
        <authorList>
            <person name="Dujon B."/>
            <person name="Sherman D."/>
            <person name="Fischer G."/>
            <person name="Durrens P."/>
            <person name="Casaregola S."/>
            <person name="Lafontaine I."/>
            <person name="de Montigny J."/>
            <person name="Marck C."/>
            <person name="Neuveglise C."/>
            <person name="Talla E."/>
            <person name="Goffard N."/>
            <person name="Frangeul L."/>
            <person name="Aigle M."/>
            <person name="Anthouard V."/>
            <person name="Babour A."/>
            <person name="Barbe V."/>
            <person name="Barnay S."/>
            <person name="Blanchin S."/>
            <person name="Beckerich J.-M."/>
            <person name="Beyne E."/>
            <person name="Bleykasten C."/>
            <person name="Boisrame A."/>
            <person name="Boyer J."/>
            <person name="Cattolico L."/>
            <person name="Confanioleri F."/>
            <person name="de Daruvar A."/>
            <person name="Despons L."/>
            <person name="Fabre E."/>
            <person name="Fairhead C."/>
            <person name="Ferry-Dumazet H."/>
            <person name="Groppi A."/>
            <person name="Hantraye F."/>
            <person name="Hennequin C."/>
            <person name="Jauniaux N."/>
            <person name="Joyet P."/>
            <person name="Kachouri R."/>
            <person name="Kerrest A."/>
            <person name="Koszul R."/>
            <person name="Lemaire M."/>
            <person name="Lesur I."/>
            <person name="Ma L."/>
            <person name="Muller H."/>
            <person name="Nicaud J.-M."/>
            <person name="Nikolski M."/>
            <person name="Oztas S."/>
            <person name="Ozier-Kalogeropoulos O."/>
            <person name="Pellenz S."/>
            <person name="Potier S."/>
            <person name="Richard G.-F."/>
            <person name="Straub M.-L."/>
            <person name="Suleau A."/>
            <person name="Swennen D."/>
            <person name="Tekaia F."/>
            <person name="Wesolowski-Louvel M."/>
            <person name="Westhof E."/>
            <person name="Wirth B."/>
            <person name="Zeniou-Meyer M."/>
            <person name="Zivanovic Y."/>
            <person name="Bolotin-Fukuhara M."/>
            <person name="Thierry A."/>
            <person name="Bouchier C."/>
            <person name="Caudron B."/>
            <person name="Scarpelli C."/>
            <person name="Gaillardin C."/>
            <person name="Weissenbach J."/>
            <person name="Wincker P."/>
            <person name="Souciet J.-L."/>
        </authorList>
    </citation>
    <scope>NUCLEOTIDE SEQUENCE [LARGE SCALE GENOMIC DNA]</scope>
    <source>
        <strain>ATCC 8585 / CBS 2359 / DSM 70799 / NBRC 1267 / NRRL Y-1140 / WM37</strain>
    </source>
</reference>
<gene>
    <name type="primary">PFK2</name>
    <name type="ordered locus">KLLA0F06248g</name>
</gene>
<accession>Q03216</accession>
<accession>Q6CL26</accession>
<comment type="function">
    <text>Catalyzes the phosphorylation of D-fructose 6-phosphate to fructose 1,6-bisphosphate by ATP, the first committing step of glycolysis.</text>
</comment>
<comment type="catalytic activity">
    <reaction evidence="1">
        <text>beta-D-fructose 6-phosphate + ATP = beta-D-fructose 1,6-bisphosphate + ADP + H(+)</text>
        <dbReference type="Rhea" id="RHEA:16109"/>
        <dbReference type="ChEBI" id="CHEBI:15378"/>
        <dbReference type="ChEBI" id="CHEBI:30616"/>
        <dbReference type="ChEBI" id="CHEBI:32966"/>
        <dbReference type="ChEBI" id="CHEBI:57634"/>
        <dbReference type="ChEBI" id="CHEBI:456216"/>
        <dbReference type="EC" id="2.7.1.11"/>
    </reaction>
</comment>
<comment type="cofactor">
    <cofactor evidence="1">
        <name>Mg(2+)</name>
        <dbReference type="ChEBI" id="CHEBI:18420"/>
    </cofactor>
</comment>
<comment type="activity regulation">
    <text evidence="1">Allosterically activated by ADP, AMP, or fructose 2,6-bisphosphate, and allosterically inhibited by ATP or citrate.</text>
</comment>
<comment type="pathway">
    <text evidence="1">Carbohydrate degradation; glycolysis; D-glyceraldehyde 3-phosphate and glycerone phosphate from D-glucose: step 3/4.</text>
</comment>
<comment type="subunit">
    <text>Heterooctamer of 4 alpha and 4 beta chains.</text>
</comment>
<comment type="subcellular location">
    <subcellularLocation>
        <location evidence="1">Cytoplasm</location>
    </subcellularLocation>
</comment>
<comment type="similarity">
    <text evidence="1">Belongs to the phosphofructokinase type A (PFKA) family. ATP-dependent PFK group I subfamily. Eukaryotic two domain clade 'E' sub-subfamily.</text>
</comment>
<organism>
    <name type="scientific">Kluyveromyces lactis (strain ATCC 8585 / CBS 2359 / DSM 70799 / NBRC 1267 / NRRL Y-1140 / WM37)</name>
    <name type="common">Yeast</name>
    <name type="synonym">Candida sphaerica</name>
    <dbReference type="NCBI Taxonomy" id="284590"/>
    <lineage>
        <taxon>Eukaryota</taxon>
        <taxon>Fungi</taxon>
        <taxon>Dikarya</taxon>
        <taxon>Ascomycota</taxon>
        <taxon>Saccharomycotina</taxon>
        <taxon>Saccharomycetes</taxon>
        <taxon>Saccharomycetales</taxon>
        <taxon>Saccharomycetaceae</taxon>
        <taxon>Kluyveromyces</taxon>
    </lineage>
</organism>
<feature type="chain" id="PRO_0000112041" description="ATP-dependent 6-phosphofructokinase subunit beta">
    <location>
        <begin position="1"/>
        <end position="938"/>
    </location>
</feature>
<feature type="region of interest" description="N-terminal catalytic PFK domain 1">
    <location>
        <begin position="1"/>
        <end position="552"/>
    </location>
</feature>
<feature type="region of interest" description="Interdomain linker">
    <location>
        <begin position="553"/>
        <end position="566"/>
    </location>
</feature>
<feature type="region of interest" description="C-terminal regulatory PFK domain 2">
    <location>
        <begin position="567"/>
        <end position="938"/>
    </location>
</feature>
<feature type="active site" description="Proton acceptor" evidence="1">
    <location>
        <position position="327"/>
    </location>
</feature>
<feature type="binding site" evidence="1">
    <location>
        <position position="185"/>
    </location>
    <ligand>
        <name>ATP</name>
        <dbReference type="ChEBI" id="CHEBI:30616"/>
    </ligand>
</feature>
<feature type="binding site" evidence="1">
    <location>
        <begin position="249"/>
        <end position="250"/>
    </location>
    <ligand>
        <name>ATP</name>
        <dbReference type="ChEBI" id="CHEBI:30616"/>
    </ligand>
</feature>
<feature type="binding site" evidence="1">
    <location>
        <begin position="279"/>
        <end position="282"/>
    </location>
    <ligand>
        <name>ATP</name>
        <dbReference type="ChEBI" id="CHEBI:30616"/>
    </ligand>
</feature>
<feature type="binding site" evidence="1">
    <location>
        <position position="280"/>
    </location>
    <ligand>
        <name>Mg(2+)</name>
        <dbReference type="ChEBI" id="CHEBI:18420"/>
        <note>catalytic</note>
    </ligand>
</feature>
<feature type="binding site" evidence="1">
    <location>
        <begin position="325"/>
        <end position="327"/>
    </location>
    <ligand>
        <name>beta-D-fructose 6-phosphate</name>
        <dbReference type="ChEBI" id="CHEBI:57634"/>
        <label>2</label>
        <note>ligand shared with subunit alpha</note>
    </ligand>
</feature>
<feature type="binding site" evidence="1">
    <location>
        <position position="362"/>
    </location>
    <ligand>
        <name>beta-D-fructose 6-phosphate</name>
        <dbReference type="ChEBI" id="CHEBI:57634"/>
        <label>1</label>
        <note>ligand shared with subunit alpha</note>
    </ligand>
</feature>
<feature type="binding site" evidence="1">
    <location>
        <begin position="369"/>
        <end position="371"/>
    </location>
    <ligand>
        <name>beta-D-fructose 6-phosphate</name>
        <dbReference type="ChEBI" id="CHEBI:57634"/>
        <label>2</label>
        <note>ligand shared with subunit alpha</note>
    </ligand>
</feature>
<feature type="binding site" evidence="1">
    <location>
        <position position="426"/>
    </location>
    <ligand>
        <name>beta-D-fructose 6-phosphate</name>
        <dbReference type="ChEBI" id="CHEBI:57634"/>
        <label>2</label>
        <note>ligand shared with subunit alpha</note>
    </ligand>
</feature>
<feature type="binding site" evidence="1">
    <location>
        <position position="454"/>
    </location>
    <ligand>
        <name>beta-D-fructose 6-phosphate</name>
        <dbReference type="ChEBI" id="CHEBI:57634"/>
        <label>1</label>
        <note>ligand shared with subunit alpha</note>
    </ligand>
</feature>
<feature type="binding site" evidence="1">
    <location>
        <begin position="460"/>
        <end position="463"/>
    </location>
    <ligand>
        <name>beta-D-fructose 6-phosphate</name>
        <dbReference type="ChEBI" id="CHEBI:57634"/>
        <label>2</label>
        <note>ligand shared with subunit alpha</note>
    </ligand>
</feature>
<feature type="binding site" evidence="1">
    <location>
        <position position="637"/>
    </location>
    <ligand>
        <name>beta-D-fructose 2,6-bisphosphate</name>
        <dbReference type="ChEBI" id="CHEBI:58579"/>
        <label>2</label>
        <note>allosteric activator; ligand shared with subunit alpha</note>
    </ligand>
</feature>
<feature type="binding site" evidence="1">
    <location>
        <begin position="695"/>
        <end position="699"/>
    </location>
    <ligand>
        <name>beta-D-fructose 2,6-bisphosphate</name>
        <dbReference type="ChEBI" id="CHEBI:58579"/>
        <label>2</label>
        <note>allosteric activator; ligand shared with subunit alpha</note>
    </ligand>
</feature>
<feature type="binding site" evidence="1">
    <location>
        <position position="733"/>
    </location>
    <ligand>
        <name>beta-D-fructose 2,6-bisphosphate</name>
        <dbReference type="ChEBI" id="CHEBI:58579"/>
        <label>1</label>
        <note>allosteric activator; ligand shared with subunit alpha</note>
    </ligand>
</feature>
<feature type="binding site" evidence="1">
    <location>
        <begin position="740"/>
        <end position="742"/>
    </location>
    <ligand>
        <name>beta-D-fructose 2,6-bisphosphate</name>
        <dbReference type="ChEBI" id="CHEBI:58579"/>
        <label>2</label>
        <note>allosteric activator; ligand shared with subunit alpha</note>
    </ligand>
</feature>
<feature type="binding site" evidence="1">
    <location>
        <position position="826"/>
    </location>
    <ligand>
        <name>beta-D-fructose 2,6-bisphosphate</name>
        <dbReference type="ChEBI" id="CHEBI:58579"/>
        <label>1</label>
        <note>allosteric activator; ligand shared with subunit alpha</note>
    </ligand>
</feature>
<feature type="binding site" evidence="1">
    <location>
        <begin position="832"/>
        <end position="835"/>
    </location>
    <ligand>
        <name>beta-D-fructose 2,6-bisphosphate</name>
        <dbReference type="ChEBI" id="CHEBI:58579"/>
        <label>2</label>
        <note>allosteric activator; ligand shared with subunit alpha</note>
    </ligand>
</feature>
<feature type="binding site" evidence="1">
    <location>
        <position position="915"/>
    </location>
    <ligand>
        <name>beta-D-fructose 2,6-bisphosphate</name>
        <dbReference type="ChEBI" id="CHEBI:58579"/>
        <label>2</label>
        <note>allosteric activator; ligand shared with subunit alpha</note>
    </ligand>
</feature>
<feature type="sequence conflict" description="In Ref. 1; CAA78964." evidence="2" ref="1">
    <location>
        <position position="523"/>
    </location>
</feature>
<feature type="sequence conflict" description="In Ref. 1; CAA78964." evidence="2" ref="1">
    <original>D</original>
    <variation>H</variation>
    <location>
        <position position="554"/>
    </location>
</feature>
<feature type="sequence conflict" description="In Ref. 1; CAA78964." evidence="2" ref="1">
    <original>FS</original>
    <variation>LR</variation>
    <location>
        <begin position="783"/>
        <end position="784"/>
    </location>
</feature>
<feature type="sequence conflict" description="In Ref. 1; CAA78964." evidence="2" ref="1">
    <original>TIADHLVGRKKL</original>
    <variation>PLRTICRKEKTYEIKNVSASSKFPLKWMYIIM</variation>
    <location>
        <begin position="927"/>
        <end position="938"/>
    </location>
</feature>
<name>PFKA2_KLULA</name>
<protein>
    <recommendedName>
        <fullName evidence="1">ATP-dependent 6-phosphofructokinase subunit beta</fullName>
        <shortName evidence="1">ATP-PFK 2</shortName>
        <shortName evidence="1">Phosphofructokinase 2</shortName>
        <ecNumber evidence="1">2.7.1.11</ecNumber>
    </recommendedName>
    <alternativeName>
        <fullName evidence="1">Phosphohexokinase 2</fullName>
    </alternativeName>
</protein>
<evidence type="ECO:0000255" key="1">
    <source>
        <dbReference type="HAMAP-Rule" id="MF_03184"/>
    </source>
</evidence>
<evidence type="ECO:0000305" key="2"/>